<accession>A8MHL1</accession>
<comment type="function">
    <text evidence="1">This protein binds to 23S rRNA in the presence of protein L20.</text>
</comment>
<comment type="subunit">
    <text evidence="1">Part of the 50S ribosomal subunit. Contacts protein L20.</text>
</comment>
<comment type="similarity">
    <text evidence="1">Belongs to the bacterial ribosomal protein bL21 family.</text>
</comment>
<feature type="chain" id="PRO_1000067798" description="Large ribosomal subunit protein bL21">
    <location>
        <begin position="1"/>
        <end position="103"/>
    </location>
</feature>
<reference key="1">
    <citation type="submission" date="2007-10" db="EMBL/GenBank/DDBJ databases">
        <title>Complete genome of Alkaliphilus oremlandii OhILAs.</title>
        <authorList>
            <person name="Copeland A."/>
            <person name="Lucas S."/>
            <person name="Lapidus A."/>
            <person name="Barry K."/>
            <person name="Detter J.C."/>
            <person name="Glavina del Rio T."/>
            <person name="Hammon N."/>
            <person name="Israni S."/>
            <person name="Dalin E."/>
            <person name="Tice H."/>
            <person name="Pitluck S."/>
            <person name="Chain P."/>
            <person name="Malfatti S."/>
            <person name="Shin M."/>
            <person name="Vergez L."/>
            <person name="Schmutz J."/>
            <person name="Larimer F."/>
            <person name="Land M."/>
            <person name="Hauser L."/>
            <person name="Kyrpides N."/>
            <person name="Mikhailova N."/>
            <person name="Stolz J.F."/>
            <person name="Dawson A."/>
            <person name="Fisher E."/>
            <person name="Crable B."/>
            <person name="Perera E."/>
            <person name="Lisak J."/>
            <person name="Ranganathan M."/>
            <person name="Basu P."/>
            <person name="Richardson P."/>
        </authorList>
    </citation>
    <scope>NUCLEOTIDE SEQUENCE [LARGE SCALE GENOMIC DNA]</scope>
    <source>
        <strain>OhILAs</strain>
    </source>
</reference>
<protein>
    <recommendedName>
        <fullName evidence="1">Large ribosomal subunit protein bL21</fullName>
    </recommendedName>
    <alternativeName>
        <fullName evidence="2">50S ribosomal protein L21</fullName>
    </alternativeName>
</protein>
<gene>
    <name evidence="1" type="primary">rplU</name>
    <name type="ordered locus">Clos_1753</name>
</gene>
<dbReference type="EMBL" id="CP000853">
    <property type="protein sequence ID" value="ABW19293.1"/>
    <property type="molecule type" value="Genomic_DNA"/>
</dbReference>
<dbReference type="RefSeq" id="WP_012159605.1">
    <property type="nucleotide sequence ID" value="NC_009922.1"/>
</dbReference>
<dbReference type="SMR" id="A8MHL1"/>
<dbReference type="STRING" id="350688.Clos_1753"/>
<dbReference type="KEGG" id="aoe:Clos_1753"/>
<dbReference type="eggNOG" id="COG0261">
    <property type="taxonomic scope" value="Bacteria"/>
</dbReference>
<dbReference type="HOGENOM" id="CLU_061463_3_2_9"/>
<dbReference type="OrthoDB" id="9813334at2"/>
<dbReference type="Proteomes" id="UP000000269">
    <property type="component" value="Chromosome"/>
</dbReference>
<dbReference type="GO" id="GO:0005737">
    <property type="term" value="C:cytoplasm"/>
    <property type="evidence" value="ECO:0007669"/>
    <property type="project" value="UniProtKB-ARBA"/>
</dbReference>
<dbReference type="GO" id="GO:1990904">
    <property type="term" value="C:ribonucleoprotein complex"/>
    <property type="evidence" value="ECO:0007669"/>
    <property type="project" value="UniProtKB-KW"/>
</dbReference>
<dbReference type="GO" id="GO:0005840">
    <property type="term" value="C:ribosome"/>
    <property type="evidence" value="ECO:0007669"/>
    <property type="project" value="UniProtKB-KW"/>
</dbReference>
<dbReference type="GO" id="GO:0019843">
    <property type="term" value="F:rRNA binding"/>
    <property type="evidence" value="ECO:0007669"/>
    <property type="project" value="UniProtKB-UniRule"/>
</dbReference>
<dbReference type="GO" id="GO:0003735">
    <property type="term" value="F:structural constituent of ribosome"/>
    <property type="evidence" value="ECO:0007669"/>
    <property type="project" value="InterPro"/>
</dbReference>
<dbReference type="GO" id="GO:0006412">
    <property type="term" value="P:translation"/>
    <property type="evidence" value="ECO:0007669"/>
    <property type="project" value="UniProtKB-UniRule"/>
</dbReference>
<dbReference type="HAMAP" id="MF_01363">
    <property type="entry name" value="Ribosomal_bL21"/>
    <property type="match status" value="1"/>
</dbReference>
<dbReference type="InterPro" id="IPR028909">
    <property type="entry name" value="bL21-like"/>
</dbReference>
<dbReference type="InterPro" id="IPR036164">
    <property type="entry name" value="bL21-like_sf"/>
</dbReference>
<dbReference type="InterPro" id="IPR001787">
    <property type="entry name" value="Ribosomal_bL21"/>
</dbReference>
<dbReference type="InterPro" id="IPR018258">
    <property type="entry name" value="Ribosomal_bL21_CS"/>
</dbReference>
<dbReference type="NCBIfam" id="TIGR00061">
    <property type="entry name" value="L21"/>
    <property type="match status" value="1"/>
</dbReference>
<dbReference type="PANTHER" id="PTHR21349">
    <property type="entry name" value="50S RIBOSOMAL PROTEIN L21"/>
    <property type="match status" value="1"/>
</dbReference>
<dbReference type="PANTHER" id="PTHR21349:SF0">
    <property type="entry name" value="LARGE RIBOSOMAL SUBUNIT PROTEIN BL21M"/>
    <property type="match status" value="1"/>
</dbReference>
<dbReference type="Pfam" id="PF00829">
    <property type="entry name" value="Ribosomal_L21p"/>
    <property type="match status" value="1"/>
</dbReference>
<dbReference type="SUPFAM" id="SSF141091">
    <property type="entry name" value="L21p-like"/>
    <property type="match status" value="1"/>
</dbReference>
<dbReference type="PROSITE" id="PS01169">
    <property type="entry name" value="RIBOSOMAL_L21"/>
    <property type="match status" value="1"/>
</dbReference>
<evidence type="ECO:0000255" key="1">
    <source>
        <dbReference type="HAMAP-Rule" id="MF_01363"/>
    </source>
</evidence>
<evidence type="ECO:0000305" key="2"/>
<organism>
    <name type="scientific">Alkaliphilus oremlandii (strain OhILAs)</name>
    <name type="common">Clostridium oremlandii (strain OhILAs)</name>
    <dbReference type="NCBI Taxonomy" id="350688"/>
    <lineage>
        <taxon>Bacteria</taxon>
        <taxon>Bacillati</taxon>
        <taxon>Bacillota</taxon>
        <taxon>Clostridia</taxon>
        <taxon>Peptostreptococcales</taxon>
        <taxon>Natronincolaceae</taxon>
        <taxon>Alkaliphilus</taxon>
    </lineage>
</organism>
<sequence>MYAIIETGGKQYRVQEGDTLFVEKLDANQGDIVTIDSVLAVSKDGNLTVGAPMVAGAKVEAKVLEQGKAKKIIIFKYKPKKDYRRKQGHRQPYTKLVIEKINA</sequence>
<name>RL21_ALKOO</name>
<proteinExistence type="inferred from homology"/>
<keyword id="KW-1185">Reference proteome</keyword>
<keyword id="KW-0687">Ribonucleoprotein</keyword>
<keyword id="KW-0689">Ribosomal protein</keyword>
<keyword id="KW-0694">RNA-binding</keyword>
<keyword id="KW-0699">rRNA-binding</keyword>